<dbReference type="EMBL" id="AE000666">
    <property type="protein sequence ID" value="AAB85024.1"/>
    <property type="molecule type" value="Genomic_DNA"/>
</dbReference>
<dbReference type="PIR" id="C69168">
    <property type="entry name" value="C69168"/>
</dbReference>
<dbReference type="STRING" id="187420.MTH_518"/>
<dbReference type="PaxDb" id="187420-MTH_518"/>
<dbReference type="EnsemblBacteria" id="AAB85024">
    <property type="protein sequence ID" value="AAB85024"/>
    <property type="gene ID" value="MTH_518"/>
</dbReference>
<dbReference type="KEGG" id="mth:MTH_518"/>
<dbReference type="PATRIC" id="fig|187420.15.peg.496"/>
<dbReference type="HOGENOM" id="CLU_154418_0_0_2"/>
<dbReference type="InParanoid" id="O26618"/>
<dbReference type="Proteomes" id="UP000005223">
    <property type="component" value="Chromosome"/>
</dbReference>
<dbReference type="GO" id="GO:0005886">
    <property type="term" value="C:plasma membrane"/>
    <property type="evidence" value="ECO:0007669"/>
    <property type="project" value="UniProtKB-SubCell"/>
</dbReference>
<dbReference type="InterPro" id="IPR019206">
    <property type="entry name" value="DUF2085_TM"/>
</dbReference>
<dbReference type="Pfam" id="PF09858">
    <property type="entry name" value="DUF2085"/>
    <property type="match status" value="1"/>
</dbReference>
<protein>
    <recommendedName>
        <fullName>Uncharacterized protein MTH_518</fullName>
    </recommendedName>
</protein>
<name>Y518_METTH</name>
<feature type="chain" id="PRO_0000107376" description="Uncharacterized protein MTH_518">
    <location>
        <begin position="1"/>
        <end position="111"/>
    </location>
</feature>
<feature type="transmembrane region" description="Helical" evidence="1">
    <location>
        <begin position="45"/>
        <end position="65"/>
    </location>
</feature>
<feature type="transmembrane region" description="Helical" evidence="1">
    <location>
        <begin position="91"/>
        <end position="111"/>
    </location>
</feature>
<evidence type="ECO:0000255" key="1"/>
<evidence type="ECO:0000305" key="2"/>
<accession>O26618</accession>
<comment type="subcellular location">
    <subcellularLocation>
        <location evidence="2">Cell membrane</location>
        <topology evidence="2">Multi-pass membrane protein</topology>
    </subcellularLocation>
</comment>
<keyword id="KW-1003">Cell membrane</keyword>
<keyword id="KW-0472">Membrane</keyword>
<keyword id="KW-1185">Reference proteome</keyword>
<keyword id="KW-0812">Transmembrane</keyword>
<keyword id="KW-1133">Transmembrane helix</keyword>
<sequence length="111" mass="12685">MVCMRFRYICHRKPERTFSFRGHYFPVCSRCTGIYLGAFTYFLYAFLIPVKYTAATVLLALLLVIPTFIDGFTQLMGYRESNNVLRFSTGLPAGIGLAVLTKVLKHLILHI</sequence>
<organism>
    <name type="scientific">Methanothermobacter thermautotrophicus (strain ATCC 29096 / DSM 1053 / JCM 10044 / NBRC 100330 / Delta H)</name>
    <name type="common">Methanobacterium thermoautotrophicum</name>
    <dbReference type="NCBI Taxonomy" id="187420"/>
    <lineage>
        <taxon>Archaea</taxon>
        <taxon>Methanobacteriati</taxon>
        <taxon>Methanobacteriota</taxon>
        <taxon>Methanomada group</taxon>
        <taxon>Methanobacteria</taxon>
        <taxon>Methanobacteriales</taxon>
        <taxon>Methanobacteriaceae</taxon>
        <taxon>Methanothermobacter</taxon>
    </lineage>
</organism>
<gene>
    <name type="ordered locus">MTH_518</name>
</gene>
<proteinExistence type="predicted"/>
<reference key="1">
    <citation type="journal article" date="1997" name="J. Bacteriol.">
        <title>Complete genome sequence of Methanobacterium thermoautotrophicum deltaH: functional analysis and comparative genomics.</title>
        <authorList>
            <person name="Smith D.R."/>
            <person name="Doucette-Stamm L.A."/>
            <person name="Deloughery C."/>
            <person name="Lee H.-M."/>
            <person name="Dubois J."/>
            <person name="Aldredge T."/>
            <person name="Bashirzadeh R."/>
            <person name="Blakely D."/>
            <person name="Cook R."/>
            <person name="Gilbert K."/>
            <person name="Harrison D."/>
            <person name="Hoang L."/>
            <person name="Keagle P."/>
            <person name="Lumm W."/>
            <person name="Pothier B."/>
            <person name="Qiu D."/>
            <person name="Spadafora R."/>
            <person name="Vicare R."/>
            <person name="Wang Y."/>
            <person name="Wierzbowski J."/>
            <person name="Gibson R."/>
            <person name="Jiwani N."/>
            <person name="Caruso A."/>
            <person name="Bush D."/>
            <person name="Safer H."/>
            <person name="Patwell D."/>
            <person name="Prabhakar S."/>
            <person name="McDougall S."/>
            <person name="Shimer G."/>
            <person name="Goyal A."/>
            <person name="Pietrovski S."/>
            <person name="Church G.M."/>
            <person name="Daniels C.J."/>
            <person name="Mao J.-I."/>
            <person name="Rice P."/>
            <person name="Noelling J."/>
            <person name="Reeve J.N."/>
        </authorList>
    </citation>
    <scope>NUCLEOTIDE SEQUENCE [LARGE SCALE GENOMIC DNA]</scope>
    <source>
        <strain>ATCC 29096 / DSM 1053 / JCM 10044 / NBRC 100330 / Delta H</strain>
    </source>
</reference>